<sequence length="241" mass="28840">MRLKLSLTPKQDFSFDKINKHTIQGFIYSLLKDTEFGEMHNQPRFKFWCFSDIFPPNDFVKGEDKYLLISSPREEFINVLYERLDNLEEVNLNNFKFEVSELKKFDLKVKNKFITGSPIVLYKDKDRGEYIKFYDDDFDLMFFVQRLQDNAVKKYKAFYNEEPVLNGFIFDRISPRVRNGRVDVYVRIAKKGREFLVVGTTWKLLEKIKIRKEERKFYKFIMDCGLGEKNSLGFGFINPIK</sequence>
<keyword id="KW-0051">Antiviral defense</keyword>
<keyword id="KW-0255">Endonuclease</keyword>
<keyword id="KW-0378">Hydrolase</keyword>
<keyword id="KW-0540">Nuclease</keyword>
<keyword id="KW-1185">Reference proteome</keyword>
<keyword id="KW-0694">RNA-binding</keyword>
<gene>
    <name type="primary">cas6b</name>
    <name type="ordered locus">MJ1234</name>
</gene>
<evidence type="ECO:0000250" key="1">
    <source>
        <dbReference type="UniProtKB" id="Q8U1S4"/>
    </source>
</evidence>
<evidence type="ECO:0000305" key="2"/>
<accession>Q58631</accession>
<dbReference type="EC" id="3.1.-.-"/>
<dbReference type="EMBL" id="L77117">
    <property type="protein sequence ID" value="AAB99238.1"/>
    <property type="molecule type" value="Genomic_DNA"/>
</dbReference>
<dbReference type="PIR" id="A64454">
    <property type="entry name" value="A64454"/>
</dbReference>
<dbReference type="RefSeq" id="WP_010870746.1">
    <property type="nucleotide sequence ID" value="NC_000909.1"/>
</dbReference>
<dbReference type="SMR" id="Q58631"/>
<dbReference type="STRING" id="243232.MJ_1234"/>
<dbReference type="PaxDb" id="243232-MJ_1234"/>
<dbReference type="DNASU" id="1452130"/>
<dbReference type="EnsemblBacteria" id="AAB99238">
    <property type="protein sequence ID" value="AAB99238"/>
    <property type="gene ID" value="MJ_1234"/>
</dbReference>
<dbReference type="GeneID" id="1452130"/>
<dbReference type="KEGG" id="mja:MJ_1234"/>
<dbReference type="eggNOG" id="arCOG04342">
    <property type="taxonomic scope" value="Archaea"/>
</dbReference>
<dbReference type="HOGENOM" id="CLU_089858_1_0_2"/>
<dbReference type="InParanoid" id="Q58631"/>
<dbReference type="OrthoDB" id="43942at2157"/>
<dbReference type="PhylomeDB" id="Q58631"/>
<dbReference type="Proteomes" id="UP000000805">
    <property type="component" value="Chromosome"/>
</dbReference>
<dbReference type="GO" id="GO:0004519">
    <property type="term" value="F:endonuclease activity"/>
    <property type="evidence" value="ECO:0007669"/>
    <property type="project" value="UniProtKB-KW"/>
</dbReference>
<dbReference type="GO" id="GO:0003723">
    <property type="term" value="F:RNA binding"/>
    <property type="evidence" value="ECO:0007669"/>
    <property type="project" value="UniProtKB-KW"/>
</dbReference>
<dbReference type="GO" id="GO:0051607">
    <property type="term" value="P:defense response to virus"/>
    <property type="evidence" value="ECO:0007669"/>
    <property type="project" value="UniProtKB-KW"/>
</dbReference>
<dbReference type="CDD" id="cd21140">
    <property type="entry name" value="Cas6_I-like"/>
    <property type="match status" value="1"/>
</dbReference>
<dbReference type="Gene3D" id="3.30.70.1890">
    <property type="match status" value="1"/>
</dbReference>
<dbReference type="Gene3D" id="3.30.70.1900">
    <property type="match status" value="1"/>
</dbReference>
<dbReference type="InterPro" id="IPR049435">
    <property type="entry name" value="Cas_Cas6_C"/>
</dbReference>
<dbReference type="InterPro" id="IPR010156">
    <property type="entry name" value="CRISPR-assoc_prot_Cas6"/>
</dbReference>
<dbReference type="InterPro" id="IPR045747">
    <property type="entry name" value="CRISPR-assoc_prot_Cas6_N_sf"/>
</dbReference>
<dbReference type="NCBIfam" id="TIGR01877">
    <property type="entry name" value="cas_cas6"/>
    <property type="match status" value="1"/>
</dbReference>
<dbReference type="PANTHER" id="PTHR36984">
    <property type="entry name" value="CRISPR-ASSOCIATED ENDORIBONUCLEASE CAS6 1"/>
    <property type="match status" value="1"/>
</dbReference>
<dbReference type="PANTHER" id="PTHR36984:SF1">
    <property type="entry name" value="CRISPR-ASSOCIATED ENDORIBONUCLEASE CAS6 1"/>
    <property type="match status" value="1"/>
</dbReference>
<dbReference type="Pfam" id="PF01881">
    <property type="entry name" value="Cas_Cas6_C"/>
    <property type="match status" value="1"/>
</dbReference>
<dbReference type="PIRSF" id="PIRSF005054">
    <property type="entry name" value="PF1131"/>
    <property type="match status" value="1"/>
</dbReference>
<feature type="chain" id="PRO_0000107230" description="CRISPR-associated endoribonuclease Cas6 2">
    <location>
        <begin position="1"/>
        <end position="241"/>
    </location>
</feature>
<feature type="active site" description="Proton acceptor" evidence="1">
    <location>
        <position position="28"/>
    </location>
</feature>
<feature type="active site" description="Proton donor" evidence="1">
    <location>
        <position position="40"/>
    </location>
</feature>
<feature type="site" description="Transition state stabilizer" evidence="1">
    <location>
        <position position="46"/>
    </location>
</feature>
<organism>
    <name type="scientific">Methanocaldococcus jannaschii (strain ATCC 43067 / DSM 2661 / JAL-1 / JCM 10045 / NBRC 100440)</name>
    <name type="common">Methanococcus jannaschii</name>
    <dbReference type="NCBI Taxonomy" id="243232"/>
    <lineage>
        <taxon>Archaea</taxon>
        <taxon>Methanobacteriati</taxon>
        <taxon>Methanobacteriota</taxon>
        <taxon>Methanomada group</taxon>
        <taxon>Methanococci</taxon>
        <taxon>Methanococcales</taxon>
        <taxon>Methanocaldococcaceae</taxon>
        <taxon>Methanocaldococcus</taxon>
    </lineage>
</organism>
<reference key="1">
    <citation type="journal article" date="1996" name="Science">
        <title>Complete genome sequence of the methanogenic archaeon, Methanococcus jannaschii.</title>
        <authorList>
            <person name="Bult C.J."/>
            <person name="White O."/>
            <person name="Olsen G.J."/>
            <person name="Zhou L."/>
            <person name="Fleischmann R.D."/>
            <person name="Sutton G.G."/>
            <person name="Blake J.A."/>
            <person name="FitzGerald L.M."/>
            <person name="Clayton R.A."/>
            <person name="Gocayne J.D."/>
            <person name="Kerlavage A.R."/>
            <person name="Dougherty B.A."/>
            <person name="Tomb J.-F."/>
            <person name="Adams M.D."/>
            <person name="Reich C.I."/>
            <person name="Overbeek R."/>
            <person name="Kirkness E.F."/>
            <person name="Weinstock K.G."/>
            <person name="Merrick J.M."/>
            <person name="Glodek A."/>
            <person name="Scott J.L."/>
            <person name="Geoghagen N.S.M."/>
            <person name="Weidman J.F."/>
            <person name="Fuhrmann J.L."/>
            <person name="Nguyen D."/>
            <person name="Utterback T.R."/>
            <person name="Kelley J.M."/>
            <person name="Peterson J.D."/>
            <person name="Sadow P.W."/>
            <person name="Hanna M.C."/>
            <person name="Cotton M.D."/>
            <person name="Roberts K.M."/>
            <person name="Hurst M.A."/>
            <person name="Kaine B.P."/>
            <person name="Borodovsky M."/>
            <person name="Klenk H.-P."/>
            <person name="Fraser C.M."/>
            <person name="Smith H.O."/>
            <person name="Woese C.R."/>
            <person name="Venter J.C."/>
        </authorList>
    </citation>
    <scope>NUCLEOTIDE SEQUENCE [LARGE SCALE GENOMIC DNA]</scope>
    <source>
        <strain>ATCC 43067 / DSM 2661 / JAL-1 / JCM 10045 / NBRC 100440</strain>
    </source>
</reference>
<protein>
    <recommendedName>
        <fullName>CRISPR-associated endoribonuclease Cas6 2</fullName>
        <ecNumber>3.1.-.-</ecNumber>
    </recommendedName>
</protein>
<comment type="function">
    <text evidence="1">CRISPR (clustered regularly interspaced short palindromic repeat) is an adaptive immune system that provides protection against mobile genetic elements (viruses, transposable elements and conjugative plasmids). CRISPR clusters contain sequences complementary to antecedent mobile elements and target invading nucleic acids. CRISPR clusters are transcribed and processed into CRISPR RNA (crRNA). This protein processes pre-crRNA into individual crRNA units.</text>
</comment>
<comment type="similarity">
    <text evidence="2">Belongs to the CRISPR-associated protein Cas6/Cse3/CasE family.</text>
</comment>
<proteinExistence type="inferred from homology"/>
<name>CAS6B_METJA</name>